<evidence type="ECO:0000250" key="1"/>
<evidence type="ECO:0000255" key="2"/>
<evidence type="ECO:0000269" key="3">
    <source>
    </source>
</evidence>
<evidence type="ECO:0000305" key="4"/>
<dbReference type="EMBL" id="U33628">
    <property type="protein sequence ID" value="AAC48538.1"/>
    <property type="status" value="ALT_FRAME"/>
    <property type="molecule type" value="mRNA"/>
</dbReference>
<dbReference type="EMBL" id="AF263546">
    <property type="protein sequence ID" value="AAG23168.1"/>
    <property type="molecule type" value="mRNA"/>
</dbReference>
<dbReference type="RefSeq" id="NP_001003197.2">
    <property type="nucleotide sequence ID" value="NM_001003197.2"/>
</dbReference>
<dbReference type="PaxDb" id="9612-ENSCAFP00000043148"/>
<dbReference type="Ensembl" id="ENSCAFT00000031252.4">
    <property type="protein sequence ID" value="ENSCAFP00000043148.1"/>
    <property type="gene ID" value="ENSCAFG00000019657.4"/>
</dbReference>
<dbReference type="Ensembl" id="ENSCAFT00030015590.1">
    <property type="protein sequence ID" value="ENSCAFP00030013585.1"/>
    <property type="gene ID" value="ENSCAFG00030008495.1"/>
</dbReference>
<dbReference type="Ensembl" id="ENSCAFT00040022749.1">
    <property type="protein sequence ID" value="ENSCAFP00040019713.1"/>
    <property type="gene ID" value="ENSCAFG00040012340.1"/>
</dbReference>
<dbReference type="Ensembl" id="ENSCAFT00845047474.1">
    <property type="protein sequence ID" value="ENSCAFP00845037250.1"/>
    <property type="gene ID" value="ENSCAFG00845026947.1"/>
</dbReference>
<dbReference type="GeneID" id="403847"/>
<dbReference type="KEGG" id="cfa:403847"/>
<dbReference type="CTD" id="403847"/>
<dbReference type="VEuPathDB" id="HostDB:ENSCAFG00845026947"/>
<dbReference type="GeneTree" id="ENSGT00950000185491"/>
<dbReference type="HOGENOM" id="CLU_2170142_0_0_1"/>
<dbReference type="InParanoid" id="Q9GLJ9"/>
<dbReference type="OMA" id="NSHCGEN"/>
<dbReference type="Proteomes" id="UP000002254">
    <property type="component" value="Chromosome 5"/>
</dbReference>
<dbReference type="Proteomes" id="UP000694429">
    <property type="component" value="Chromosome 5"/>
</dbReference>
<dbReference type="Proteomes" id="UP000694542">
    <property type="component" value="Chromosome 5"/>
</dbReference>
<dbReference type="Proteomes" id="UP000805418">
    <property type="component" value="Chromosome 5"/>
</dbReference>
<dbReference type="Bgee" id="ENSCAFG00000019657">
    <property type="expression patterns" value="Expressed in lymph node and 24 other cell types or tissues"/>
</dbReference>
<dbReference type="GO" id="GO:0033017">
    <property type="term" value="C:sarcoplasmic reticulum membrane"/>
    <property type="evidence" value="ECO:0007669"/>
    <property type="project" value="UniProtKB-SubCell"/>
</dbReference>
<organism>
    <name type="scientific">Canis lupus familiaris</name>
    <name type="common">Dog</name>
    <name type="synonym">Canis familiaris</name>
    <dbReference type="NCBI Taxonomy" id="9615"/>
    <lineage>
        <taxon>Eukaryota</taxon>
        <taxon>Metazoa</taxon>
        <taxon>Chordata</taxon>
        <taxon>Craniata</taxon>
        <taxon>Vertebrata</taxon>
        <taxon>Euteleostomi</taxon>
        <taxon>Mammalia</taxon>
        <taxon>Eutheria</taxon>
        <taxon>Laurasiatheria</taxon>
        <taxon>Carnivora</taxon>
        <taxon>Caniformia</taxon>
        <taxon>Canidae</taxon>
        <taxon>Canis</taxon>
    </lineage>
</organism>
<protein>
    <recommendedName>
        <fullName>Putative protein SCAMPER</fullName>
    </recommendedName>
    <alternativeName>
        <fullName>Sphingolipid calcium release-mediating protein of the endoplasmic reticulum</fullName>
        <shortName>SCaMPER</shortName>
    </alternativeName>
</protein>
<keyword id="KW-0472">Membrane</keyword>
<keyword id="KW-1185">Reference proteome</keyword>
<keyword id="KW-0703">Sarcoplasmic reticulum</keyword>
<keyword id="KW-0812">Transmembrane</keyword>
<keyword id="KW-1133">Transmembrane helix</keyword>
<name>SCAMP_CANLF</name>
<comment type="function">
    <text evidence="3">Putative sphingolipid-gated calcium channel.</text>
</comment>
<comment type="subunit">
    <text evidence="1">Homodimer.</text>
</comment>
<comment type="subcellular location">
    <subcellularLocation>
        <location>Sarcoplasmic reticulum</location>
    </subcellularLocation>
    <subcellularLocation>
        <location evidence="1">Sarcoplasmic reticulum membrane</location>
        <topology evidence="1">Single-pass membrane protein</topology>
    </subcellularLocation>
    <text evidence="1">Localizes to the sarcotubular junctions where T tubules connect to the sarcoplasmic reticulum.</text>
</comment>
<comment type="caution">
    <text evidence="4">According to PubMed:11829755, the data associated with PubMed:8700873 are to be considered with caution due to a frameshift in the cDNA used for the experiments.</text>
</comment>
<comment type="caution">
    <text evidence="4">According to PubMed:12421694, orthologs exist in human (AC Q8IWQ8) and rat (AC Q8CGM6). However, the submitted sequences do not match human and rat reference genome assemblies, suggesting that they are artifactual and that SCAMPER most probably does not exist in human and rat.</text>
</comment>
<comment type="sequence caution" evidence="4">
    <conflict type="frameshift">
        <sequence resource="EMBL-CDS" id="AAC48538"/>
    </conflict>
</comment>
<proteinExistence type="evidence at protein level"/>
<sequence>MLKVSRVSSEGLISLSITEAPDLKIRDPKIEKLYLPVFYLNAHIYLNALSTLLNSHCGENCFHGYEQLQNATFPVWRNIFIYINRVRNIKRQGGGGGVSGKGEMKQCFLS</sequence>
<feature type="chain" id="PRO_0000392602" description="Putative protein SCAMPER">
    <location>
        <begin position="1"/>
        <end position="110"/>
    </location>
</feature>
<feature type="transmembrane region" description="Helical" evidence="2">
    <location>
        <begin position="33"/>
        <end position="53"/>
    </location>
</feature>
<accession>Q9GLJ9</accession>
<accession>Q28261</accession>
<gene>
    <name type="primary">SCAMPER</name>
</gene>
<reference key="1">
    <citation type="journal article" date="1996" name="Proc. Natl. Acad. Sci. U.S.A.">
        <title>Molecular cloning and characterization of SCaMPER, a sphingolipid Ca2+ release-mediating protein from endoplasmic reticulum.</title>
        <authorList>
            <person name="Mao C."/>
            <person name="Kim S.H."/>
            <person name="Almenoff J.S."/>
            <person name="Rudner X.L."/>
            <person name="Kearney D.M."/>
            <person name="Kindman L.A."/>
        </authorList>
    </citation>
    <scope>NUCLEOTIDE SEQUENCE [MRNA]</scope>
    <scope>FUNCTION</scope>
    <source>
        <tissue>Kidney</tissue>
    </source>
</reference>
<reference key="2">
    <citation type="journal article" date="2002" name="Biochem. J.">
        <title>Re-evaluation of primary structure, topology, and localization of Scamper, a putative intracellular Ca2+ channel activated by sphingosylphosphocholine.</title>
        <authorList>
            <person name="Schnurbus R."/>
            <person name="de Pietri Tonelli D."/>
            <person name="Grohovaz F."/>
            <person name="Zacchetti D."/>
        </authorList>
    </citation>
    <scope>NUCLEOTIDE SEQUENCE [MRNA]</scope>
    <scope>CHARACTERIZATION</scope>
</reference>
<reference key="3">
    <citation type="journal article" date="2003" name="Am. J. Physiol.">
        <title>Expression and functional characterization of SCaMPER: a sphingolipid-modulated calcium channel of cardiomyocytes.</title>
        <authorList>
            <person name="Cavalli A.L."/>
            <person name="O'Brien N.W."/>
            <person name="Barlow S.B."/>
            <person name="Betto R."/>
            <person name="Glembotski C.C."/>
            <person name="Palade P.T."/>
            <person name="Sabbadini R.A."/>
        </authorList>
    </citation>
    <scope>IDENTIFICATION</scope>
</reference>